<protein>
    <recommendedName>
        <fullName>Putative lipoprotein LpqE</fullName>
    </recommendedName>
</protein>
<organism>
    <name type="scientific">Mycobacterium leprae (strain TN)</name>
    <dbReference type="NCBI Taxonomy" id="272631"/>
    <lineage>
        <taxon>Bacteria</taxon>
        <taxon>Bacillati</taxon>
        <taxon>Actinomycetota</taxon>
        <taxon>Actinomycetes</taxon>
        <taxon>Mycobacteriales</taxon>
        <taxon>Mycobacteriaceae</taxon>
        <taxon>Mycobacterium</taxon>
    </lineage>
</organism>
<gene>
    <name type="primary">lpqE</name>
    <name type="ordered locus">ML0319</name>
    <name type="ORF">MLCB1450.02</name>
</gene>
<reference key="1">
    <citation type="journal article" date="2001" name="Nature">
        <title>Massive gene decay in the leprosy bacillus.</title>
        <authorList>
            <person name="Cole S.T."/>
            <person name="Eiglmeier K."/>
            <person name="Parkhill J."/>
            <person name="James K.D."/>
            <person name="Thomson N.R."/>
            <person name="Wheeler P.R."/>
            <person name="Honore N."/>
            <person name="Garnier T."/>
            <person name="Churcher C.M."/>
            <person name="Harris D.E."/>
            <person name="Mungall K.L."/>
            <person name="Basham D."/>
            <person name="Brown D."/>
            <person name="Chillingworth T."/>
            <person name="Connor R."/>
            <person name="Davies R.M."/>
            <person name="Devlin K."/>
            <person name="Duthoy S."/>
            <person name="Feltwell T."/>
            <person name="Fraser A."/>
            <person name="Hamlin N."/>
            <person name="Holroyd S."/>
            <person name="Hornsby T."/>
            <person name="Jagels K."/>
            <person name="Lacroix C."/>
            <person name="Maclean J."/>
            <person name="Moule S."/>
            <person name="Murphy L.D."/>
            <person name="Oliver K."/>
            <person name="Quail M.A."/>
            <person name="Rajandream M.A."/>
            <person name="Rutherford K.M."/>
            <person name="Rutter S."/>
            <person name="Seeger K."/>
            <person name="Simon S."/>
            <person name="Simmonds M."/>
            <person name="Skelton J."/>
            <person name="Squares R."/>
            <person name="Squares S."/>
            <person name="Stevens K."/>
            <person name="Taylor K."/>
            <person name="Whitehead S."/>
            <person name="Woodward J.R."/>
            <person name="Barrell B.G."/>
        </authorList>
    </citation>
    <scope>NUCLEOTIDE SEQUENCE [LARGE SCALE GENOMIC DNA]</scope>
    <source>
        <strain>TN</strain>
    </source>
</reference>
<accession>Q9ZBM7</accession>
<evidence type="ECO:0000255" key="1">
    <source>
        <dbReference type="PROSITE-ProRule" id="PRU00303"/>
    </source>
</evidence>
<comment type="subcellular location">
    <subcellularLocation>
        <location evidence="1">Cell membrane</location>
        <topology evidence="1">Lipid-anchor</topology>
    </subcellularLocation>
</comment>
<dbReference type="EMBL" id="AL035159">
    <property type="protein sequence ID" value="CAA22686.1"/>
    <property type="molecule type" value="Genomic_DNA"/>
</dbReference>
<dbReference type="EMBL" id="AL583918">
    <property type="protein sequence ID" value="CAC29827.1"/>
    <property type="molecule type" value="Genomic_DNA"/>
</dbReference>
<dbReference type="PIR" id="T44723">
    <property type="entry name" value="T44723"/>
</dbReference>
<dbReference type="RefSeq" id="NP_301346.1">
    <property type="nucleotide sequence ID" value="NC_002677.1"/>
</dbReference>
<dbReference type="RefSeq" id="WP_010907670.1">
    <property type="nucleotide sequence ID" value="NC_002677.1"/>
</dbReference>
<dbReference type="SMR" id="Q9ZBM7"/>
<dbReference type="STRING" id="272631.gene:17574138"/>
<dbReference type="KEGG" id="mle:ML0319"/>
<dbReference type="PATRIC" id="fig|272631.5.peg.517"/>
<dbReference type="Leproma" id="ML0319"/>
<dbReference type="eggNOG" id="COG2847">
    <property type="taxonomic scope" value="Bacteria"/>
</dbReference>
<dbReference type="HOGENOM" id="CLU_089306_0_0_11"/>
<dbReference type="OrthoDB" id="5188566at2"/>
<dbReference type="Proteomes" id="UP000000806">
    <property type="component" value="Chromosome"/>
</dbReference>
<dbReference type="GO" id="GO:0005886">
    <property type="term" value="C:plasma membrane"/>
    <property type="evidence" value="ECO:0007669"/>
    <property type="project" value="UniProtKB-SubCell"/>
</dbReference>
<dbReference type="Gene3D" id="2.60.40.1890">
    <property type="entry name" value="PCu(A)C copper chaperone"/>
    <property type="match status" value="1"/>
</dbReference>
<dbReference type="InterPro" id="IPR036182">
    <property type="entry name" value="PCuAC_sf"/>
</dbReference>
<dbReference type="PROSITE" id="PS51257">
    <property type="entry name" value="PROKAR_LIPOPROTEIN"/>
    <property type="match status" value="1"/>
</dbReference>
<sequence length="183" mass="19274">MSRFKISLPALATRVAVLGFLTLMASVLGGCGAGQISQTATQEPAVNGNRVTLNNLALRDIRIQAAQTGDFLQSGRTVDLMLVAINNSPYVTDRLVSITSDIGTVALNGYTQLPTNGMLFIGTSEGQRIKPPPLQSNNIAKAIVTLAKPITNGLTYNFTFNFEKAGQANVAVPVSAGLAPRQT</sequence>
<feature type="signal peptide" evidence="1">
    <location>
        <begin position="1"/>
        <end position="30"/>
    </location>
</feature>
<feature type="chain" id="PRO_0000018123" description="Putative lipoprotein LpqE">
    <location>
        <begin position="31"/>
        <end position="183"/>
    </location>
</feature>
<feature type="lipid moiety-binding region" description="N-palmitoyl cysteine" evidence="1">
    <location>
        <position position="31"/>
    </location>
</feature>
<feature type="lipid moiety-binding region" description="S-diacylglycerol cysteine" evidence="1">
    <location>
        <position position="31"/>
    </location>
</feature>
<name>LPQE_MYCLE</name>
<proteinExistence type="inferred from homology"/>
<keyword id="KW-1003">Cell membrane</keyword>
<keyword id="KW-0449">Lipoprotein</keyword>
<keyword id="KW-0472">Membrane</keyword>
<keyword id="KW-0564">Palmitate</keyword>
<keyword id="KW-1185">Reference proteome</keyword>
<keyword id="KW-0732">Signal</keyword>